<accession>B4GKQ3</accession>
<reference key="1">
    <citation type="journal article" date="2007" name="Nature">
        <title>Evolution of genes and genomes on the Drosophila phylogeny.</title>
        <authorList>
            <consortium name="Drosophila 12 genomes consortium"/>
        </authorList>
    </citation>
    <scope>NUCLEOTIDE SEQUENCE [LARGE SCALE GENOMIC DNA]</scope>
    <source>
        <strain>MSH-3 / Tucson 14011-0111.49</strain>
    </source>
</reference>
<protein>
    <recommendedName>
        <fullName evidence="4">Adenylyltransferase and sulfurtransferase MOCS3</fullName>
    </recommendedName>
    <alternativeName>
        <fullName evidence="4">Molybdenum cofactor synthesis protein 3</fullName>
    </alternativeName>
    <alternativeName>
        <fullName evidence="3">Ubiquitin activating enzyme 4</fullName>
    </alternativeName>
    <domain>
        <recommendedName>
            <fullName evidence="4">Molybdopterin-synthase adenylyltransferase</fullName>
            <ecNumber evidence="4">2.7.7.80</ecNumber>
        </recommendedName>
        <alternativeName>
            <fullName evidence="4">Adenylyltransferase MOCS3</fullName>
        </alternativeName>
        <alternativeName>
            <fullName evidence="4">Sulfur carrier protein MOCS2A adenylyltransferase</fullName>
        </alternativeName>
    </domain>
    <domain>
        <recommendedName>
            <fullName evidence="4">Molybdopterin-synthase sulfurtransferase</fullName>
            <ecNumber evidence="4">2.8.1.11</ecNumber>
        </recommendedName>
        <alternativeName>
            <fullName evidence="4">Sulfur carrier protein MOCS2A sulfurtransferase</fullName>
        </alternativeName>
        <alternativeName>
            <fullName evidence="4">Sulfurtransferase MOCS3</fullName>
        </alternativeName>
    </domain>
</protein>
<gene>
    <name evidence="3" type="primary">Uba4</name>
    <name type="ORF">GL26133</name>
</gene>
<dbReference type="EC" id="2.7.7.80" evidence="4"/>
<dbReference type="EC" id="2.8.1.11" evidence="4"/>
<dbReference type="EMBL" id="CH479184">
    <property type="protein sequence ID" value="EDW37219.1"/>
    <property type="molecule type" value="Genomic_DNA"/>
</dbReference>
<dbReference type="SMR" id="B4GKQ3"/>
<dbReference type="STRING" id="7234.B4GKQ3"/>
<dbReference type="EnsemblMetazoa" id="FBtr0191748">
    <property type="protein sequence ID" value="FBpp0190240"/>
    <property type="gene ID" value="FBgn0163715"/>
</dbReference>
<dbReference type="EnsemblMetazoa" id="XM_002018987.2">
    <property type="protein sequence ID" value="XP_002019023.1"/>
    <property type="gene ID" value="LOC6593981"/>
</dbReference>
<dbReference type="GeneID" id="6593981"/>
<dbReference type="KEGG" id="dpe:6593981"/>
<dbReference type="CTD" id="34187"/>
<dbReference type="eggNOG" id="KOG2017">
    <property type="taxonomic scope" value="Eukaryota"/>
</dbReference>
<dbReference type="HOGENOM" id="CLU_013325_1_2_1"/>
<dbReference type="OMA" id="IPDVGMD"/>
<dbReference type="OrthoDB" id="10261062at2759"/>
<dbReference type="PhylomeDB" id="B4GKQ3"/>
<dbReference type="UniPathway" id="UPA00344"/>
<dbReference type="UniPathway" id="UPA00988"/>
<dbReference type="Proteomes" id="UP000008744">
    <property type="component" value="Unassembled WGS sequence"/>
</dbReference>
<dbReference type="GO" id="GO:0005829">
    <property type="term" value="C:cytosol"/>
    <property type="evidence" value="ECO:0000250"/>
    <property type="project" value="UniProtKB"/>
</dbReference>
<dbReference type="GO" id="GO:0005524">
    <property type="term" value="F:ATP binding"/>
    <property type="evidence" value="ECO:0007669"/>
    <property type="project" value="UniProtKB-KW"/>
</dbReference>
<dbReference type="GO" id="GO:0046872">
    <property type="term" value="F:metal ion binding"/>
    <property type="evidence" value="ECO:0007669"/>
    <property type="project" value="UniProtKB-KW"/>
</dbReference>
<dbReference type="GO" id="GO:0061605">
    <property type="term" value="F:molybdopterin-synthase adenylyltransferase activity"/>
    <property type="evidence" value="ECO:0007669"/>
    <property type="project" value="UniProtKB-EC"/>
</dbReference>
<dbReference type="GO" id="GO:0061604">
    <property type="term" value="F:molybdopterin-synthase sulfurtransferase activity"/>
    <property type="evidence" value="ECO:0000250"/>
    <property type="project" value="UniProtKB"/>
</dbReference>
<dbReference type="GO" id="GO:0004792">
    <property type="term" value="F:thiosulfate-cyanide sulfurtransferase activity"/>
    <property type="evidence" value="ECO:0007669"/>
    <property type="project" value="TreeGrafter"/>
</dbReference>
<dbReference type="GO" id="GO:0042292">
    <property type="term" value="F:URM1 activating enzyme activity"/>
    <property type="evidence" value="ECO:0007669"/>
    <property type="project" value="TreeGrafter"/>
</dbReference>
<dbReference type="GO" id="GO:0006777">
    <property type="term" value="P:Mo-molybdopterin cofactor biosynthetic process"/>
    <property type="evidence" value="ECO:0000250"/>
    <property type="project" value="UniProtKB"/>
</dbReference>
<dbReference type="GO" id="GO:0032447">
    <property type="term" value="P:protein urmylation"/>
    <property type="evidence" value="ECO:0007669"/>
    <property type="project" value="EnsemblMetazoa"/>
</dbReference>
<dbReference type="GO" id="GO:0002143">
    <property type="term" value="P:tRNA wobble position uridine thiolation"/>
    <property type="evidence" value="ECO:0007669"/>
    <property type="project" value="InterPro"/>
</dbReference>
<dbReference type="CDD" id="cd01526">
    <property type="entry name" value="RHOD_ThiF"/>
    <property type="match status" value="1"/>
</dbReference>
<dbReference type="CDD" id="cd00757">
    <property type="entry name" value="ThiF_MoeB_HesA_family"/>
    <property type="match status" value="1"/>
</dbReference>
<dbReference type="FunFam" id="3.40.250.10:FF:000014">
    <property type="entry name" value="Adenylyltransferase and sulfurtransferase MOCS3"/>
    <property type="match status" value="1"/>
</dbReference>
<dbReference type="FunFam" id="3.40.50.720:FF:000206">
    <property type="entry name" value="Adenylyltransferase and sulfurtransferase MOCS3"/>
    <property type="match status" value="1"/>
</dbReference>
<dbReference type="Gene3D" id="3.40.50.720">
    <property type="entry name" value="NAD(P)-binding Rossmann-like Domain"/>
    <property type="match status" value="1"/>
</dbReference>
<dbReference type="Gene3D" id="3.40.250.10">
    <property type="entry name" value="Rhodanese-like domain"/>
    <property type="match status" value="1"/>
</dbReference>
<dbReference type="HAMAP" id="MF_03049">
    <property type="entry name" value="MOCS3_Uba4"/>
    <property type="match status" value="1"/>
</dbReference>
<dbReference type="InterPro" id="IPR028885">
    <property type="entry name" value="MOCS3/Uba4"/>
</dbReference>
<dbReference type="InterPro" id="IPR001763">
    <property type="entry name" value="Rhodanese-like_dom"/>
</dbReference>
<dbReference type="InterPro" id="IPR036873">
    <property type="entry name" value="Rhodanese-like_dom_sf"/>
</dbReference>
<dbReference type="InterPro" id="IPR045886">
    <property type="entry name" value="ThiF/MoeB/HesA"/>
</dbReference>
<dbReference type="InterPro" id="IPR000594">
    <property type="entry name" value="ThiF_NAD_FAD-bd"/>
</dbReference>
<dbReference type="InterPro" id="IPR035985">
    <property type="entry name" value="Ubiquitin-activating_enz"/>
</dbReference>
<dbReference type="NCBIfam" id="NF004281">
    <property type="entry name" value="PRK05690.1"/>
    <property type="match status" value="1"/>
</dbReference>
<dbReference type="PANTHER" id="PTHR10953:SF102">
    <property type="entry name" value="ADENYLYLTRANSFERASE AND SULFURTRANSFERASE MOCS3"/>
    <property type="match status" value="1"/>
</dbReference>
<dbReference type="PANTHER" id="PTHR10953">
    <property type="entry name" value="UBIQUITIN-ACTIVATING ENZYME E1"/>
    <property type="match status" value="1"/>
</dbReference>
<dbReference type="Pfam" id="PF00581">
    <property type="entry name" value="Rhodanese"/>
    <property type="match status" value="1"/>
</dbReference>
<dbReference type="Pfam" id="PF00899">
    <property type="entry name" value="ThiF"/>
    <property type="match status" value="1"/>
</dbReference>
<dbReference type="SMART" id="SM00450">
    <property type="entry name" value="RHOD"/>
    <property type="match status" value="1"/>
</dbReference>
<dbReference type="SUPFAM" id="SSF69572">
    <property type="entry name" value="Activating enzymes of the ubiquitin-like proteins"/>
    <property type="match status" value="1"/>
</dbReference>
<dbReference type="PROSITE" id="PS50206">
    <property type="entry name" value="RHODANESE_3"/>
    <property type="match status" value="1"/>
</dbReference>
<comment type="function">
    <text evidence="4">Plays a central role in 2-thiolation of mcm(5)S(2)U at tRNA wobble positions of cytosolic tRNA(Lys), tRNA(Glu) and tRNA(Gln). Also essential during biosynthesis of the molybdenum cofactor. Acts by mediating the C-terminal thiocarboxylation of sulfur carriers URM1 and MOCS2A. Its N-terminus first activates URM1 and MOCS2A as acyl-adenylates (-COAMP), then the persulfide sulfur on the catalytic cysteine is transferred to URM1 and MOCS2A to form thiocarboxylation (-COSH) of their C-terminus. The reaction probably involves hydrogen sulfide that is generated from the persulfide intermediate and that acts as a nucleophile towards URM1 and MOCS2A. Subsequently, a transient disulfide bond is formed. Does not use thiosulfate as sulfur donor; NFS1 probably acting as a sulfur donor for thiocarboxylation reactions.</text>
</comment>
<comment type="catalytic activity">
    <reaction evidence="4">
        <text>[molybdopterin-synthase sulfur-carrier protein]-C-terminal Gly-Gly + ATP + H(+) = [molybdopterin-synthase sulfur-carrier protein]-C-terminal Gly-Gly-AMP + diphosphate</text>
        <dbReference type="Rhea" id="RHEA:43616"/>
        <dbReference type="Rhea" id="RHEA-COMP:12159"/>
        <dbReference type="Rhea" id="RHEA-COMP:12202"/>
        <dbReference type="ChEBI" id="CHEBI:15378"/>
        <dbReference type="ChEBI" id="CHEBI:30616"/>
        <dbReference type="ChEBI" id="CHEBI:33019"/>
        <dbReference type="ChEBI" id="CHEBI:90618"/>
        <dbReference type="ChEBI" id="CHEBI:90778"/>
        <dbReference type="EC" id="2.7.7.80"/>
    </reaction>
</comment>
<comment type="catalytic activity">
    <reaction evidence="4">
        <text>[molybdopterin-synthase sulfur-carrier protein]-C-terminal Gly-Gly-AMP + S-sulfanyl-L-cysteinyl-[cysteine desulfurase] + AH2 = [molybdopterin-synthase sulfur-carrier protein]-C-terminal-Gly-aminoethanethioate + L-cysteinyl-[cysteine desulfurase] + A + AMP + 2 H(+)</text>
        <dbReference type="Rhea" id="RHEA:48612"/>
        <dbReference type="Rhea" id="RHEA-COMP:12157"/>
        <dbReference type="Rhea" id="RHEA-COMP:12158"/>
        <dbReference type="Rhea" id="RHEA-COMP:12159"/>
        <dbReference type="Rhea" id="RHEA-COMP:19907"/>
        <dbReference type="ChEBI" id="CHEBI:13193"/>
        <dbReference type="ChEBI" id="CHEBI:15378"/>
        <dbReference type="ChEBI" id="CHEBI:17499"/>
        <dbReference type="ChEBI" id="CHEBI:29950"/>
        <dbReference type="ChEBI" id="CHEBI:61963"/>
        <dbReference type="ChEBI" id="CHEBI:90618"/>
        <dbReference type="ChEBI" id="CHEBI:232372"/>
        <dbReference type="ChEBI" id="CHEBI:456215"/>
        <dbReference type="EC" id="2.8.1.11"/>
    </reaction>
</comment>
<comment type="cofactor">
    <cofactor evidence="4">
        <name>Zn(2+)</name>
        <dbReference type="ChEBI" id="CHEBI:29105"/>
    </cofactor>
    <text evidence="4">Binds 1 zinc ion per subunit.</text>
</comment>
<comment type="pathway">
    <text evidence="4">tRNA modification; 5-methoxycarbonylmethyl-2-thiouridine-tRNA biosynthesis.</text>
</comment>
<comment type="pathway">
    <text evidence="4">Cofactor biosynthesis; molybdopterin biosynthesis.</text>
</comment>
<comment type="subcellular location">
    <subcellularLocation>
        <location evidence="2">Cytoplasm</location>
        <location evidence="2">Cytosol</location>
    </subcellularLocation>
</comment>
<comment type="similarity">
    <text evidence="4">In the N-terminal section; belongs to the HesA/MoeB/ThiF family. UBA4 subfamily.</text>
</comment>
<feature type="chain" id="PRO_0000369206" description="Adenylyltransferase and sulfurtransferase MOCS3">
    <location>
        <begin position="1"/>
        <end position="451"/>
    </location>
</feature>
<feature type="domain" description="Rhodanese" evidence="4">
    <location>
        <begin position="353"/>
        <end position="449"/>
    </location>
</feature>
<feature type="region of interest" description="Disordered" evidence="5">
    <location>
        <begin position="42"/>
        <end position="62"/>
    </location>
</feature>
<feature type="compositionally biased region" description="Acidic residues" evidence="5">
    <location>
        <begin position="43"/>
        <end position="52"/>
    </location>
</feature>
<feature type="active site" description="Glycyl thioester intermediate; for adenylyltransferase activity" evidence="4">
    <location>
        <position position="246"/>
    </location>
</feature>
<feature type="active site" description="Cysteine persulfide intermediate; for sulfurtransferase activity" evidence="4">
    <location>
        <position position="408"/>
    </location>
</feature>
<feature type="binding site" evidence="4">
    <location>
        <position position="99"/>
    </location>
    <ligand>
        <name>ATP</name>
        <dbReference type="ChEBI" id="CHEBI:30616"/>
    </ligand>
</feature>
<feature type="binding site" evidence="4">
    <location>
        <position position="120"/>
    </location>
    <ligand>
        <name>ATP</name>
        <dbReference type="ChEBI" id="CHEBI:30616"/>
    </ligand>
</feature>
<feature type="binding site" evidence="4">
    <location>
        <begin position="127"/>
        <end position="131"/>
    </location>
    <ligand>
        <name>ATP</name>
        <dbReference type="ChEBI" id="CHEBI:30616"/>
    </ligand>
</feature>
<feature type="binding site" evidence="4">
    <location>
        <position position="144"/>
    </location>
    <ligand>
        <name>ATP</name>
        <dbReference type="ChEBI" id="CHEBI:30616"/>
    </ligand>
</feature>
<feature type="binding site" evidence="4">
    <location>
        <begin position="188"/>
        <end position="189"/>
    </location>
    <ligand>
        <name>ATP</name>
        <dbReference type="ChEBI" id="CHEBI:30616"/>
    </ligand>
</feature>
<feature type="binding site" evidence="4">
    <location>
        <position position="229"/>
    </location>
    <ligand>
        <name>Zn(2+)</name>
        <dbReference type="ChEBI" id="CHEBI:29105"/>
    </ligand>
</feature>
<feature type="binding site" evidence="4">
    <location>
        <position position="232"/>
    </location>
    <ligand>
        <name>Zn(2+)</name>
        <dbReference type="ChEBI" id="CHEBI:29105"/>
    </ligand>
</feature>
<feature type="binding site" evidence="4">
    <location>
        <position position="304"/>
    </location>
    <ligand>
        <name>Zn(2+)</name>
        <dbReference type="ChEBI" id="CHEBI:29105"/>
    </ligand>
</feature>
<feature type="binding site" evidence="4">
    <location>
        <position position="307"/>
    </location>
    <ligand>
        <name>Zn(2+)</name>
        <dbReference type="ChEBI" id="CHEBI:29105"/>
    </ligand>
</feature>
<feature type="modified residue" description="Phosphothreonine" evidence="1">
    <location>
        <position position="60"/>
    </location>
</feature>
<keyword id="KW-0067">ATP-binding</keyword>
<keyword id="KW-0963">Cytoplasm</keyword>
<keyword id="KW-0479">Metal-binding</keyword>
<keyword id="KW-0501">Molybdenum cofactor biosynthesis</keyword>
<keyword id="KW-0511">Multifunctional enzyme</keyword>
<keyword id="KW-0547">Nucleotide-binding</keyword>
<keyword id="KW-0548">Nucleotidyltransferase</keyword>
<keyword id="KW-0597">Phosphoprotein</keyword>
<keyword id="KW-1185">Reference proteome</keyword>
<keyword id="KW-0808">Transferase</keyword>
<keyword id="KW-0819">tRNA processing</keyword>
<keyword id="KW-0862">Zinc</keyword>
<evidence type="ECO:0000250" key="1"/>
<evidence type="ECO:0000250" key="2">
    <source>
        <dbReference type="UniProtKB" id="O95396"/>
    </source>
</evidence>
<evidence type="ECO:0000250" key="3">
    <source>
        <dbReference type="UniProtKB" id="Q9VLJ8"/>
    </source>
</evidence>
<evidence type="ECO:0000255" key="4">
    <source>
        <dbReference type="HAMAP-Rule" id="MF_03049"/>
    </source>
</evidence>
<evidence type="ECO:0000256" key="5">
    <source>
        <dbReference type="SAM" id="MobiDB-lite"/>
    </source>
</evidence>
<name>MOCS3_DROPE</name>
<proteinExistence type="inferred from homology"/>
<organism>
    <name type="scientific">Drosophila persimilis</name>
    <name type="common">Fruit fly</name>
    <dbReference type="NCBI Taxonomy" id="7234"/>
    <lineage>
        <taxon>Eukaryota</taxon>
        <taxon>Metazoa</taxon>
        <taxon>Ecdysozoa</taxon>
        <taxon>Arthropoda</taxon>
        <taxon>Hexapoda</taxon>
        <taxon>Insecta</taxon>
        <taxon>Pterygota</taxon>
        <taxon>Neoptera</taxon>
        <taxon>Endopterygota</taxon>
        <taxon>Diptera</taxon>
        <taxon>Brachycera</taxon>
        <taxon>Muscomorpha</taxon>
        <taxon>Ephydroidea</taxon>
        <taxon>Drosophilidae</taxon>
        <taxon>Drosophila</taxon>
        <taxon>Sophophora</taxon>
    </lineage>
</organism>
<sequence length="451" mass="50085">MIDSEALESERVKLKRDIADLRANLNRKEQCLRELEAAIAAGEDSDEAEESSNDMPTPQTKLTNDDIARYSRQLILQDFGVQGQLKLKNSSVLIVGMGGLGCPAAQYLVAAGCGHLGLIDYDEVERSNLHRQILHSEHRCGMSKAESARIALLELNSHCQIRCHSRLINSMNAMHIIRPYDVVLDCSDNVATRYLLNDACVMLRKPLVSGSALKMDGQLTVYGYGQGPCYRCIYPVPPPPEAVTNCGDGGVLGAVTGIIGAMQALEAIKVIIGLGDVMSGRLLIFDGSSFMFRNIRIRTKRPNCHVCSAQPLITELIDYEMFCGMHATDKDNPLDLLEPDQRLEVKEYHQKLQSQPHLLLDVRPPAEFEICQLPRSINVPLSEILDDSYLKRFAKQLEDKELPIVLLCRRGNDSQIAAQHIKNRFPAHSIRDLVGGLHAWTGSVDATFPIY</sequence>